<organism>
    <name type="scientific">Influenza A virus (strain A/Duck/Hokkaido/5/1977 H3N8)</name>
    <dbReference type="NCBI Taxonomy" id="11357"/>
    <lineage>
        <taxon>Viruses</taxon>
        <taxon>Riboviria</taxon>
        <taxon>Orthornavirae</taxon>
        <taxon>Negarnaviricota</taxon>
        <taxon>Polyploviricotina</taxon>
        <taxon>Insthoviricetes</taxon>
        <taxon>Articulavirales</taxon>
        <taxon>Orthomyxoviridae</taxon>
        <taxon>Alphainfluenzavirus</taxon>
        <taxon>Alphainfluenzavirus influenzae</taxon>
        <taxon>Influenza A virus</taxon>
    </lineage>
</organism>
<accession>P12582</accession>
<accession>Q84021</accession>
<accession>Q84022</accession>
<proteinExistence type="inferred from homology"/>
<organismHost>
    <name type="scientific">Aves</name>
    <dbReference type="NCBI Taxonomy" id="8782"/>
</organismHost>
<organismHost>
    <name type="scientific">Equus caballus</name>
    <name type="common">Horse</name>
    <dbReference type="NCBI Taxonomy" id="9796"/>
</organismHost>
<sequence>QDLPGNDNSTATLCLGHYAMPNGTLVKTITDDQIEVPNATELVQSSSTGKICNNPHRILDGRDCTLIDALLGDPHCDVFQDETWDLFVERSNAFSNCYPYDVPDYASLRSLVASSGTLEFITEGFTWTGVTQNGGSNACKRGPASGFFSRLNWLTKSGSTYPVLNVTMPNNDNFDKLYIWGVHHPSTDQEQTNLYVQASGRVTVSTRRSQQTIIPNIGSRPWVRGQSGRISIYWTIVKPGDVLVINSNGNLIAPRGYFKMRTGKSSIMRSDAPIDTCISECITPNGSIPNDKPFQNVNKITYGACPKYVKQNTLKLATGMRNVPEKQTRGLFGAIAGFIENGWEGMIDGWYGFRHQNSEGTGQAADLKSTQAAIDQINGKLNRVIEKTNEKFHQIEKEFSEVEGRIQDLEKYVEDTKIDLWSYNADVLVALENQHTIDLTDSEMNKLFEKTKRQLRENAEDMGNGCFKIYHKCDNACVESIRNGTYDHDVYRDESLNNRFQIKGVELKSGYKDWILWISFAISCFLLCVVLLGFIMWACQRGNIRCNICI</sequence>
<feature type="chain" id="PRO_0000440840" description="Hemagglutinin HA1 chain" evidence="1">
    <location>
        <begin position="1"/>
        <end position="329"/>
    </location>
</feature>
<feature type="chain" id="PRO_0000038917" description="Hemagglutinin HA2 chain" evidence="1">
    <location>
        <begin position="330"/>
        <end position="550"/>
    </location>
</feature>
<feature type="topological domain" description="Extracellular" evidence="1">
    <location>
        <begin position="1"/>
        <end position="514"/>
    </location>
</feature>
<feature type="transmembrane region" description="Helical" evidence="1">
    <location>
        <begin position="515"/>
        <end position="535"/>
    </location>
</feature>
<feature type="topological domain" description="Cytoplasmic" evidence="1">
    <location>
        <begin position="536"/>
        <end position="550"/>
    </location>
</feature>
<feature type="site" description="Cleavage; by host" evidence="1">
    <location>
        <begin position="329"/>
        <end position="330"/>
    </location>
</feature>
<feature type="lipid moiety-binding region" description="S-palmitoyl cysteine; by host" evidence="1">
    <location>
        <position position="539"/>
    </location>
</feature>
<feature type="lipid moiety-binding region" description="S-palmitoyl cysteine; by host" evidence="1">
    <location>
        <position position="546"/>
    </location>
</feature>
<feature type="lipid moiety-binding region" description="S-palmitoyl cysteine; by host" evidence="1">
    <location>
        <position position="549"/>
    </location>
</feature>
<feature type="glycosylation site" description="N-linked (GlcNAc...) asparagine; by host" evidence="1">
    <location>
        <position position="8"/>
    </location>
</feature>
<feature type="glycosylation site" description="N-linked (GlcNAc...) asparagine; by host" evidence="1">
    <location>
        <position position="22"/>
    </location>
</feature>
<feature type="glycosylation site" description="N-linked (GlcNAc...) asparagine; by host" evidence="1">
    <location>
        <position position="38"/>
    </location>
</feature>
<feature type="glycosylation site" description="N-linked (GlcNAc...) asparagine; by host" evidence="1">
    <location>
        <position position="165"/>
    </location>
</feature>
<feature type="glycosylation site" description="N-linked (GlcNAc...) asparagine; by host" evidence="1">
    <location>
        <position position="285"/>
    </location>
</feature>
<feature type="glycosylation site" description="N-linked (GlcNAc...) asparagine; by host" evidence="1">
    <location>
        <position position="483"/>
    </location>
</feature>
<feature type="disulfide bond" description="Interchain (between HA1 and HA2 chains)" evidence="1">
    <location>
        <begin position="14"/>
        <end position="466"/>
    </location>
</feature>
<feature type="disulfide bond" evidence="1">
    <location>
        <begin position="52"/>
        <end position="277"/>
    </location>
</feature>
<feature type="disulfide bond" evidence="1">
    <location>
        <begin position="64"/>
        <end position="76"/>
    </location>
</feature>
<feature type="disulfide bond" evidence="1">
    <location>
        <begin position="97"/>
        <end position="139"/>
    </location>
</feature>
<feature type="disulfide bond" evidence="1">
    <location>
        <begin position="281"/>
        <end position="305"/>
    </location>
</feature>
<feature type="disulfide bond" evidence="1">
    <location>
        <begin position="473"/>
        <end position="477"/>
    </location>
</feature>
<feature type="non-terminal residue">
    <location>
        <position position="1"/>
    </location>
</feature>
<gene>
    <name evidence="1" type="primary">HA</name>
</gene>
<comment type="function">
    <text evidence="1">Binds to sialic acid-containing receptors on the cell surface, bringing about the attachment of the virus particle to the cell. This attachment induces virion internalization either through clathrin-dependent endocytosis or through clathrin- and caveolin-independent pathway. Plays a major role in the determination of host range restriction and virulence. Class I viral fusion protein. Responsible for penetration of the virus into the cell cytoplasm by mediating the fusion of the membrane of the endocytosed virus particle with the endosomal membrane. Low pH in endosomes induces an irreversible conformational change in HA2, releasing the fusion hydrophobic peptide. Several trimers are required to form a competent fusion pore.</text>
</comment>
<comment type="subunit">
    <text evidence="1">Homotrimer of disulfide-linked HA1-HA2.</text>
</comment>
<comment type="subcellular location">
    <subcellularLocation>
        <location evidence="1">Virion membrane</location>
        <topology evidence="1">Single-pass type I membrane protein</topology>
    </subcellularLocation>
    <subcellularLocation>
        <location evidence="1">Host apical cell membrane</location>
        <topology evidence="1">Single-pass type I membrane protein</topology>
    </subcellularLocation>
    <text evidence="1">Targeted to the apical plasma membrane in epithelial polarized cells through a signal present in the transmembrane domain. Associated with glycosphingolipid- and cholesterol-enriched detergent-resistant lipid rafts.</text>
</comment>
<comment type="PTM">
    <text evidence="1">Palmitoylated.</text>
</comment>
<comment type="PTM">
    <text evidence="1">In natural infection, inactive HA is matured into HA1 and HA2 outside the cell by one or more trypsin-like, arginine-specific endoprotease secreted by the bronchial epithelial cells. One identified protease that may be involved in this process is secreted in lungs by club cells.</text>
</comment>
<comment type="miscellaneous">
    <text>Major glycoprotein, comprises over 80% of the envelope proteins present in virus particle.</text>
</comment>
<comment type="miscellaneous">
    <text>The extent of infection into host organism is determined by HA. Influenza viruses bud from the apical surface of polarized epithelial cells (e.g. bronchial epithelial cells) into lumen of lungs and are therefore usually pneumotropic. The reason is that HA is cleaved by tryptase clara which is restricted to lungs. However, HAs of H5 and H7 pantropic avian viruses subtypes can be cleaved by furin and subtilisin-type enzymes, allowing the virus to grow in other organs than lungs.</text>
</comment>
<comment type="miscellaneous">
    <text>The influenza A genome consist of 8 RNA segments. Genetic variation of hemagglutinin and/or neuraminidase genes results in the emergence of new influenza strains. The mechanism of variation can be the result of point mutations or the result of genetic reassortment between segments of two different strains.</text>
</comment>
<comment type="similarity">
    <text evidence="1">Belongs to the influenza viruses hemagglutinin family.</text>
</comment>
<reference key="1">
    <citation type="journal article" date="1987" name="Virology">
        <title>Antigenic and genetic conservation of H3 influenza virus in wild ducks.</title>
        <authorList>
            <person name="Kida H."/>
            <person name="Kawaoka Y."/>
            <person name="Naeve C.W."/>
            <person name="Webster R.G."/>
        </authorList>
    </citation>
    <scope>NUCLEOTIDE SEQUENCE [GENOMIC RNA]</scope>
</reference>
<evidence type="ECO:0000255" key="1">
    <source>
        <dbReference type="HAMAP-Rule" id="MF_04072"/>
    </source>
</evidence>
<dbReference type="EMBL" id="M16737">
    <property type="protein sequence ID" value="AAA43143.1"/>
    <property type="molecule type" value="Genomic_RNA"/>
</dbReference>
<dbReference type="SMR" id="P12582"/>
<dbReference type="GlyCosmos" id="P12582">
    <property type="glycosylation" value="6 sites, No reported glycans"/>
</dbReference>
<dbReference type="GO" id="GO:0020002">
    <property type="term" value="C:host cell plasma membrane"/>
    <property type="evidence" value="ECO:0007669"/>
    <property type="project" value="UniProtKB-SubCell"/>
</dbReference>
<dbReference type="GO" id="GO:0016020">
    <property type="term" value="C:membrane"/>
    <property type="evidence" value="ECO:0007669"/>
    <property type="project" value="UniProtKB-KW"/>
</dbReference>
<dbReference type="GO" id="GO:0019031">
    <property type="term" value="C:viral envelope"/>
    <property type="evidence" value="ECO:0007669"/>
    <property type="project" value="UniProtKB-KW"/>
</dbReference>
<dbReference type="GO" id="GO:0055036">
    <property type="term" value="C:virion membrane"/>
    <property type="evidence" value="ECO:0007669"/>
    <property type="project" value="UniProtKB-SubCell"/>
</dbReference>
<dbReference type="GO" id="GO:0046789">
    <property type="term" value="F:host cell surface receptor binding"/>
    <property type="evidence" value="ECO:0007669"/>
    <property type="project" value="InterPro"/>
</dbReference>
<dbReference type="GO" id="GO:0075512">
    <property type="term" value="P:clathrin-dependent endocytosis of virus by host cell"/>
    <property type="evidence" value="ECO:0007669"/>
    <property type="project" value="UniProtKB-KW"/>
</dbReference>
<dbReference type="GO" id="GO:0039654">
    <property type="term" value="P:fusion of virus membrane with host endosome membrane"/>
    <property type="evidence" value="ECO:0007669"/>
    <property type="project" value="UniProtKB-KW"/>
</dbReference>
<dbReference type="GO" id="GO:0019064">
    <property type="term" value="P:fusion of virus membrane with host plasma membrane"/>
    <property type="evidence" value="ECO:0007669"/>
    <property type="project" value="InterPro"/>
</dbReference>
<dbReference type="GO" id="GO:0019062">
    <property type="term" value="P:virion attachment to host cell"/>
    <property type="evidence" value="ECO:0007669"/>
    <property type="project" value="UniProtKB-KW"/>
</dbReference>
<dbReference type="FunFam" id="3.90.20.10:FF:000001">
    <property type="entry name" value="Hemagglutinin"/>
    <property type="match status" value="1"/>
</dbReference>
<dbReference type="FunFam" id="3.90.209.20:FF:000001">
    <property type="entry name" value="Hemagglutinin"/>
    <property type="match status" value="1"/>
</dbReference>
<dbReference type="Gene3D" id="3.90.20.10">
    <property type="match status" value="1"/>
</dbReference>
<dbReference type="Gene3D" id="3.90.209.20">
    <property type="match status" value="1"/>
</dbReference>
<dbReference type="HAMAP" id="MF_04072">
    <property type="entry name" value="INFV_HEMA"/>
    <property type="match status" value="1"/>
</dbReference>
<dbReference type="InterPro" id="IPR008980">
    <property type="entry name" value="Capsid_hemagglutn"/>
</dbReference>
<dbReference type="InterPro" id="IPR013828">
    <property type="entry name" value="Hemagglutn_HA1_a/b_dom_sf"/>
</dbReference>
<dbReference type="InterPro" id="IPR000149">
    <property type="entry name" value="Hemagglutn_influenz_A"/>
</dbReference>
<dbReference type="InterPro" id="IPR001364">
    <property type="entry name" value="Hemagglutn_influenz_A/B"/>
</dbReference>
<dbReference type="Pfam" id="PF00509">
    <property type="entry name" value="Hemagglutinin"/>
    <property type="match status" value="1"/>
</dbReference>
<dbReference type="PRINTS" id="PR00330">
    <property type="entry name" value="HEMAGGLUTN1"/>
</dbReference>
<dbReference type="PRINTS" id="PR00329">
    <property type="entry name" value="HEMAGGLUTN12"/>
</dbReference>
<dbReference type="SUPFAM" id="SSF58064">
    <property type="entry name" value="Influenza hemagglutinin (stalk)"/>
    <property type="match status" value="1"/>
</dbReference>
<dbReference type="SUPFAM" id="SSF49818">
    <property type="entry name" value="Viral protein domain"/>
    <property type="match status" value="1"/>
</dbReference>
<name>HEMA_I77A6</name>
<protein>
    <recommendedName>
        <fullName evidence="1">Hemagglutinin</fullName>
    </recommendedName>
    <component>
        <recommendedName>
            <fullName evidence="1">Hemagglutinin HA1 chain</fullName>
        </recommendedName>
    </component>
    <component>
        <recommendedName>
            <fullName evidence="1">Hemagglutinin HA2 chain</fullName>
        </recommendedName>
    </component>
</protein>
<keyword id="KW-1167">Clathrin- and caveolin-independent endocytosis of virus by host</keyword>
<keyword id="KW-1165">Clathrin-mediated endocytosis of virus by host</keyword>
<keyword id="KW-1015">Disulfide bond</keyword>
<keyword id="KW-1170">Fusion of virus membrane with host endosomal membrane</keyword>
<keyword id="KW-1168">Fusion of virus membrane with host membrane</keyword>
<keyword id="KW-0325">Glycoprotein</keyword>
<keyword id="KW-0348">Hemagglutinin</keyword>
<keyword id="KW-1032">Host cell membrane</keyword>
<keyword id="KW-1043">Host membrane</keyword>
<keyword id="KW-0945">Host-virus interaction</keyword>
<keyword id="KW-0449">Lipoprotein</keyword>
<keyword id="KW-0472">Membrane</keyword>
<keyword id="KW-0564">Palmitate</keyword>
<keyword id="KW-0812">Transmembrane</keyword>
<keyword id="KW-1133">Transmembrane helix</keyword>
<keyword id="KW-1161">Viral attachment to host cell</keyword>
<keyword id="KW-0261">Viral envelope protein</keyword>
<keyword id="KW-1162">Viral penetration into host cytoplasm</keyword>
<keyword id="KW-0946">Virion</keyword>
<keyword id="KW-1164">Virus endocytosis by host</keyword>
<keyword id="KW-1160">Virus entry into host cell</keyword>